<organism>
    <name type="scientific">Helicobacter hepaticus (strain ATCC 51449 / 3B1)</name>
    <dbReference type="NCBI Taxonomy" id="235279"/>
    <lineage>
        <taxon>Bacteria</taxon>
        <taxon>Pseudomonadati</taxon>
        <taxon>Campylobacterota</taxon>
        <taxon>Epsilonproteobacteria</taxon>
        <taxon>Campylobacterales</taxon>
        <taxon>Helicobacteraceae</taxon>
        <taxon>Helicobacter</taxon>
    </lineage>
</organism>
<protein>
    <recommendedName>
        <fullName evidence="1">Phosphoribosylformylglycinamidine synthase subunit PurQ</fullName>
        <shortName evidence="1">FGAM synthase</shortName>
        <ecNumber evidence="1">6.3.5.3</ecNumber>
    </recommendedName>
    <alternativeName>
        <fullName evidence="1">Formylglycinamide ribonucleotide amidotransferase subunit I</fullName>
        <shortName evidence="1">FGAR amidotransferase I</shortName>
        <shortName evidence="1">FGAR-AT I</shortName>
    </alternativeName>
    <alternativeName>
        <fullName evidence="1">Glutaminase PurQ</fullName>
        <ecNumber evidence="1">3.5.1.2</ecNumber>
    </alternativeName>
    <alternativeName>
        <fullName evidence="1">Phosphoribosylformylglycinamidine synthase subunit I</fullName>
    </alternativeName>
</protein>
<evidence type="ECO:0000255" key="1">
    <source>
        <dbReference type="HAMAP-Rule" id="MF_00421"/>
    </source>
</evidence>
<accession>Q7VFQ4</accession>
<feature type="chain" id="PRO_0000100557" description="Phosphoribosylformylglycinamidine synthase subunit PurQ">
    <location>
        <begin position="1"/>
        <end position="222"/>
    </location>
</feature>
<feature type="domain" description="Glutamine amidotransferase type-1" evidence="1">
    <location>
        <begin position="2"/>
        <end position="222"/>
    </location>
</feature>
<feature type="active site" description="Nucleophile" evidence="1">
    <location>
        <position position="86"/>
    </location>
</feature>
<feature type="active site" evidence="1">
    <location>
        <position position="194"/>
    </location>
</feature>
<feature type="active site" evidence="1">
    <location>
        <position position="196"/>
    </location>
</feature>
<proteinExistence type="inferred from homology"/>
<keyword id="KW-0067">ATP-binding</keyword>
<keyword id="KW-0963">Cytoplasm</keyword>
<keyword id="KW-0315">Glutamine amidotransferase</keyword>
<keyword id="KW-0378">Hydrolase</keyword>
<keyword id="KW-0436">Ligase</keyword>
<keyword id="KW-0547">Nucleotide-binding</keyword>
<keyword id="KW-0658">Purine biosynthesis</keyword>
<keyword id="KW-1185">Reference proteome</keyword>
<reference key="1">
    <citation type="journal article" date="2003" name="Proc. Natl. Acad. Sci. U.S.A.">
        <title>The complete genome sequence of the carcinogenic bacterium Helicobacter hepaticus.</title>
        <authorList>
            <person name="Suerbaum S."/>
            <person name="Josenhans C."/>
            <person name="Sterzenbach T."/>
            <person name="Drescher B."/>
            <person name="Brandt P."/>
            <person name="Bell M."/>
            <person name="Droege M."/>
            <person name="Fartmann B."/>
            <person name="Fischer H.-P."/>
            <person name="Ge Z."/>
            <person name="Hoerster A."/>
            <person name="Holland R."/>
            <person name="Klein K."/>
            <person name="Koenig J."/>
            <person name="Macko L."/>
            <person name="Mendz G.L."/>
            <person name="Nyakatura G."/>
            <person name="Schauer D.B."/>
            <person name="Shen Z."/>
            <person name="Weber J."/>
            <person name="Frosch M."/>
            <person name="Fox J.G."/>
        </authorList>
    </citation>
    <scope>NUCLEOTIDE SEQUENCE [LARGE SCALE GENOMIC DNA]</scope>
    <source>
        <strain>ATCC 51449 / 3B1</strain>
    </source>
</reference>
<name>PURQ_HELHP</name>
<sequence>MSVAIVRFPGTNCEFDTQYAFSLFGGVTYIVWHQDKSLPTDCHLVVIPGGFSYGDYLRCGAIAQFSPIMRVIKDFALQGGYVLGICNGFQILCEAGLLPGALKRNINLHFISQMQSLRIVSKNNAFLRSYAPNQEIRLPIAHADGNYFIDERELLELRANEQILLEYTDNPNGSVDSIAGICNEKKNVFGLMPHPERAIEDMLGSCDGKAMLDNLLHIAEMK</sequence>
<dbReference type="EC" id="6.3.5.3" evidence="1"/>
<dbReference type="EC" id="3.5.1.2" evidence="1"/>
<dbReference type="EMBL" id="AE017125">
    <property type="protein sequence ID" value="AAP78218.1"/>
    <property type="molecule type" value="Genomic_DNA"/>
</dbReference>
<dbReference type="RefSeq" id="WP_011116461.1">
    <property type="nucleotide sequence ID" value="NC_004917.1"/>
</dbReference>
<dbReference type="SMR" id="Q7VFQ4"/>
<dbReference type="STRING" id="235279.HH_1621"/>
<dbReference type="KEGG" id="hhe:HH_1621"/>
<dbReference type="eggNOG" id="COG0047">
    <property type="taxonomic scope" value="Bacteria"/>
</dbReference>
<dbReference type="HOGENOM" id="CLU_001031_3_1_7"/>
<dbReference type="OrthoDB" id="9804441at2"/>
<dbReference type="UniPathway" id="UPA00074">
    <property type="reaction ID" value="UER00128"/>
</dbReference>
<dbReference type="Proteomes" id="UP000002495">
    <property type="component" value="Chromosome"/>
</dbReference>
<dbReference type="GO" id="GO:0005737">
    <property type="term" value="C:cytoplasm"/>
    <property type="evidence" value="ECO:0007669"/>
    <property type="project" value="UniProtKB-SubCell"/>
</dbReference>
<dbReference type="GO" id="GO:0005524">
    <property type="term" value="F:ATP binding"/>
    <property type="evidence" value="ECO:0007669"/>
    <property type="project" value="UniProtKB-KW"/>
</dbReference>
<dbReference type="GO" id="GO:0004359">
    <property type="term" value="F:glutaminase activity"/>
    <property type="evidence" value="ECO:0007669"/>
    <property type="project" value="UniProtKB-EC"/>
</dbReference>
<dbReference type="GO" id="GO:0004642">
    <property type="term" value="F:phosphoribosylformylglycinamidine synthase activity"/>
    <property type="evidence" value="ECO:0007669"/>
    <property type="project" value="UniProtKB-UniRule"/>
</dbReference>
<dbReference type="GO" id="GO:0006189">
    <property type="term" value="P:'de novo' IMP biosynthetic process"/>
    <property type="evidence" value="ECO:0007669"/>
    <property type="project" value="UniProtKB-UniRule"/>
</dbReference>
<dbReference type="CDD" id="cd01740">
    <property type="entry name" value="GATase1_FGAR_AT"/>
    <property type="match status" value="1"/>
</dbReference>
<dbReference type="Gene3D" id="3.40.50.880">
    <property type="match status" value="1"/>
</dbReference>
<dbReference type="HAMAP" id="MF_00421">
    <property type="entry name" value="PurQ"/>
    <property type="match status" value="1"/>
</dbReference>
<dbReference type="InterPro" id="IPR029062">
    <property type="entry name" value="Class_I_gatase-like"/>
</dbReference>
<dbReference type="InterPro" id="IPR010075">
    <property type="entry name" value="PRibForGlyAmidine_synth_PurQ"/>
</dbReference>
<dbReference type="NCBIfam" id="TIGR01737">
    <property type="entry name" value="FGAM_synth_I"/>
    <property type="match status" value="1"/>
</dbReference>
<dbReference type="NCBIfam" id="NF002957">
    <property type="entry name" value="PRK03619.1"/>
    <property type="match status" value="1"/>
</dbReference>
<dbReference type="PANTHER" id="PTHR47552">
    <property type="entry name" value="PHOSPHORIBOSYLFORMYLGLYCINAMIDINE SYNTHASE SUBUNIT PURQ"/>
    <property type="match status" value="1"/>
</dbReference>
<dbReference type="PANTHER" id="PTHR47552:SF1">
    <property type="entry name" value="PHOSPHORIBOSYLFORMYLGLYCINAMIDINE SYNTHASE SUBUNIT PURQ"/>
    <property type="match status" value="1"/>
</dbReference>
<dbReference type="Pfam" id="PF13507">
    <property type="entry name" value="GATase_5"/>
    <property type="match status" value="1"/>
</dbReference>
<dbReference type="PIRSF" id="PIRSF001586">
    <property type="entry name" value="FGAM_synth_I"/>
    <property type="match status" value="1"/>
</dbReference>
<dbReference type="SMART" id="SM01211">
    <property type="entry name" value="GATase_5"/>
    <property type="match status" value="1"/>
</dbReference>
<dbReference type="SUPFAM" id="SSF52317">
    <property type="entry name" value="Class I glutamine amidotransferase-like"/>
    <property type="match status" value="1"/>
</dbReference>
<dbReference type="PROSITE" id="PS51273">
    <property type="entry name" value="GATASE_TYPE_1"/>
    <property type="match status" value="1"/>
</dbReference>
<gene>
    <name evidence="1" type="primary">purQ</name>
    <name type="ordered locus">HH_1621</name>
</gene>
<comment type="function">
    <text evidence="1">Part of the phosphoribosylformylglycinamidine synthase complex involved in the purines biosynthetic pathway. Catalyzes the ATP-dependent conversion of formylglycinamide ribonucleotide (FGAR) and glutamine to yield formylglycinamidine ribonucleotide (FGAM) and glutamate. The FGAM synthase complex is composed of three subunits. PurQ produces an ammonia molecule by converting glutamine to glutamate. PurL transfers the ammonia molecule to FGAR to form FGAM in an ATP-dependent manner. PurS interacts with PurQ and PurL and is thought to assist in the transfer of the ammonia molecule from PurQ to PurL.</text>
</comment>
<comment type="catalytic activity">
    <reaction evidence="1">
        <text>N(2)-formyl-N(1)-(5-phospho-beta-D-ribosyl)glycinamide + L-glutamine + ATP + H2O = 2-formamido-N(1)-(5-O-phospho-beta-D-ribosyl)acetamidine + L-glutamate + ADP + phosphate + H(+)</text>
        <dbReference type="Rhea" id="RHEA:17129"/>
        <dbReference type="ChEBI" id="CHEBI:15377"/>
        <dbReference type="ChEBI" id="CHEBI:15378"/>
        <dbReference type="ChEBI" id="CHEBI:29985"/>
        <dbReference type="ChEBI" id="CHEBI:30616"/>
        <dbReference type="ChEBI" id="CHEBI:43474"/>
        <dbReference type="ChEBI" id="CHEBI:58359"/>
        <dbReference type="ChEBI" id="CHEBI:147286"/>
        <dbReference type="ChEBI" id="CHEBI:147287"/>
        <dbReference type="ChEBI" id="CHEBI:456216"/>
        <dbReference type="EC" id="6.3.5.3"/>
    </reaction>
</comment>
<comment type="catalytic activity">
    <reaction evidence="1">
        <text>L-glutamine + H2O = L-glutamate + NH4(+)</text>
        <dbReference type="Rhea" id="RHEA:15889"/>
        <dbReference type="ChEBI" id="CHEBI:15377"/>
        <dbReference type="ChEBI" id="CHEBI:28938"/>
        <dbReference type="ChEBI" id="CHEBI:29985"/>
        <dbReference type="ChEBI" id="CHEBI:58359"/>
        <dbReference type="EC" id="3.5.1.2"/>
    </reaction>
</comment>
<comment type="pathway">
    <text evidence="1">Purine metabolism; IMP biosynthesis via de novo pathway; 5-amino-1-(5-phospho-D-ribosyl)imidazole from N(2)-formyl-N(1)-(5-phospho-D-ribosyl)glycinamide: step 1/2.</text>
</comment>
<comment type="subunit">
    <text evidence="1">Part of the FGAM synthase complex composed of 1 PurL, 1 PurQ and 2 PurS subunits.</text>
</comment>
<comment type="subcellular location">
    <subcellularLocation>
        <location evidence="1">Cytoplasm</location>
    </subcellularLocation>
</comment>